<dbReference type="EMBL" id="EQ966246">
    <property type="protein sequence ID" value="EED84728.1"/>
    <property type="molecule type" value="Genomic_DNA"/>
</dbReference>
<dbReference type="RefSeq" id="XP_002470125.1">
    <property type="nucleotide sequence ID" value="XM_002470080.1"/>
</dbReference>
<dbReference type="SMR" id="B8P366"/>
<dbReference type="FunCoup" id="B8P366">
    <property type="interactions" value="19"/>
</dbReference>
<dbReference type="STRING" id="561896.B8P366"/>
<dbReference type="KEGG" id="ppl:POSPLDRAFT_88314"/>
<dbReference type="HOGENOM" id="CLU_026505_2_0_1"/>
<dbReference type="InParanoid" id="B8P366"/>
<dbReference type="OMA" id="VPGYRQI"/>
<dbReference type="OrthoDB" id="2103793at2759"/>
<dbReference type="GO" id="GO:0032865">
    <property type="term" value="C:ERMES complex"/>
    <property type="evidence" value="ECO:0007669"/>
    <property type="project" value="UniProtKB-UniRule"/>
</dbReference>
<dbReference type="GO" id="GO:0001401">
    <property type="term" value="C:SAM complex"/>
    <property type="evidence" value="ECO:0007669"/>
    <property type="project" value="TreeGrafter"/>
</dbReference>
<dbReference type="GO" id="GO:0051654">
    <property type="term" value="P:establishment of mitochondrion localization"/>
    <property type="evidence" value="ECO:0007669"/>
    <property type="project" value="TreeGrafter"/>
</dbReference>
<dbReference type="GO" id="GO:0000002">
    <property type="term" value="P:mitochondrial genome maintenance"/>
    <property type="evidence" value="ECO:0007669"/>
    <property type="project" value="UniProtKB-UniRule"/>
</dbReference>
<dbReference type="GO" id="GO:0070096">
    <property type="term" value="P:mitochondrial outer membrane translocase complex assembly"/>
    <property type="evidence" value="ECO:0007669"/>
    <property type="project" value="UniProtKB-UniRule"/>
</dbReference>
<dbReference type="GO" id="GO:1990456">
    <property type="term" value="P:mitochondrion-endoplasmic reticulum membrane tethering"/>
    <property type="evidence" value="ECO:0007669"/>
    <property type="project" value="UniProtKB-UniRule"/>
</dbReference>
<dbReference type="GO" id="GO:0015914">
    <property type="term" value="P:phospholipid transport"/>
    <property type="evidence" value="ECO:0007669"/>
    <property type="project" value="TreeGrafter"/>
</dbReference>
<dbReference type="GO" id="GO:0045040">
    <property type="term" value="P:protein insertion into mitochondrial outer membrane"/>
    <property type="evidence" value="ECO:0007669"/>
    <property type="project" value="UniProtKB-UniRule"/>
</dbReference>
<dbReference type="HAMAP" id="MF_03102">
    <property type="entry name" value="Mdm10"/>
    <property type="match status" value="1"/>
</dbReference>
<dbReference type="InterPro" id="IPR027539">
    <property type="entry name" value="Mdm10"/>
</dbReference>
<dbReference type="PANTHER" id="PTHR28035">
    <property type="entry name" value="MITOCHONDRIAL DISTRIBUTION AND MORPHOLOGY PROTEIN 10"/>
    <property type="match status" value="1"/>
</dbReference>
<dbReference type="PANTHER" id="PTHR28035:SF1">
    <property type="entry name" value="MITOCHONDRIAL DISTRIBUTION AND MORPHOLOGY PROTEIN 10"/>
    <property type="match status" value="1"/>
</dbReference>
<dbReference type="Pfam" id="PF12519">
    <property type="entry name" value="MDM10"/>
    <property type="match status" value="2"/>
</dbReference>
<protein>
    <recommendedName>
        <fullName evidence="1">Mitochondrial distribution and morphology protein 10</fullName>
    </recommendedName>
    <alternativeName>
        <fullName evidence="1">Mitochondrial inheritance component MDM10</fullName>
    </alternativeName>
</protein>
<comment type="function">
    <text evidence="1">Component of the ERMES/MDM complex, which serves as a molecular tether to connect the endoplasmic reticulum and mitochondria. Components of this complex are involved in the control of mitochondrial shape and protein biogenesis and may function in phospholipid exchange. MDM10 is involved in the late assembly steps of the general translocase of the mitochondrial outer membrane (TOM complex). Functions in the TOM40-specific route of the assembly of outer membrane beta-barrel proteins, including the association of TOM40 with the receptor TOM22 and small TOM proteins. Can associate with the SAM(core) complex as well as the MDM12-MMM1 complex, both involved in late steps of the major beta-barrel assembly pathway, that is responsible for biogenesis of all outer membrane beta-barrel proteins. May act as a switch that shuttles between both complexes and channels precursor proteins into the TOM40-specific pathway. Plays a role in mitochondrial morphology and in the inheritance of mitochondria.</text>
</comment>
<comment type="subunit">
    <text evidence="1">Component of the ER-mitochondria encounter structure (ERMES) or MDM complex, composed of MMM1, MDM10, MDM12 and MDM34. Associates with the mitochondrial outer membrane sorting assembly machinery SAM(core) complex.</text>
</comment>
<comment type="subcellular location">
    <subcellularLocation>
        <location evidence="1">Mitochondrion outer membrane</location>
        <topology evidence="1">Multi-pass membrane protein</topology>
    </subcellularLocation>
    <text evidence="1">The ERMES/MDM complex localizes to a few discrete foci (around 10 per single cell), that represent mitochondria-endoplasmic reticulum junctions. These foci are often found next to mtDNA nucleoids.</text>
</comment>
<comment type="domain">
    <text>Lacks alpha-helical transmembrane segments, suggesting that it resides in the membrane via beta-sheet conformations similar to those predicted for other outer membrane proteins and porin.</text>
</comment>
<comment type="similarity">
    <text evidence="1">Belongs to the MDM10 family.</text>
</comment>
<feature type="chain" id="PRO_0000384196" description="Mitochondrial distribution and morphology protein 10">
    <location>
        <begin position="1"/>
        <end position="449"/>
    </location>
</feature>
<feature type="region of interest" description="Disordered" evidence="2">
    <location>
        <begin position="215"/>
        <end position="244"/>
    </location>
</feature>
<feature type="region of interest" description="Disordered" evidence="2">
    <location>
        <begin position="282"/>
        <end position="307"/>
    </location>
</feature>
<feature type="compositionally biased region" description="Low complexity" evidence="2">
    <location>
        <begin position="285"/>
        <end position="301"/>
    </location>
</feature>
<evidence type="ECO:0000255" key="1">
    <source>
        <dbReference type="HAMAP-Rule" id="MF_03102"/>
    </source>
</evidence>
<evidence type="ECO:0000256" key="2">
    <source>
        <dbReference type="SAM" id="MobiDB-lite"/>
    </source>
</evidence>
<reference key="1">
    <citation type="journal article" date="2009" name="Proc. Natl. Acad. Sci. U.S.A.">
        <title>Genome, transcriptome, and secretome analysis of wood decay fungus Postia placenta supports unique mechanisms of lignocellulose conversion.</title>
        <authorList>
            <person name="Martinez D."/>
            <person name="Challacombe J."/>
            <person name="Morgenstern I."/>
            <person name="Hibbett D."/>
            <person name="Schmoll M."/>
            <person name="Kubicek C.P."/>
            <person name="Ferreira P."/>
            <person name="Ruiz-Duenas F.J."/>
            <person name="Martinez A.T."/>
            <person name="Kersten P."/>
            <person name="Hammel K.E."/>
            <person name="Vanden Wymelenberg A."/>
            <person name="Gaskell J."/>
            <person name="Lindquist E."/>
            <person name="Sabat G."/>
            <person name="Splinter BonDurant S."/>
            <person name="Larrondo L.F."/>
            <person name="Canessa P."/>
            <person name="Vicuna R."/>
            <person name="Yadav J."/>
            <person name="Doddapaneni H."/>
            <person name="Subramanian V."/>
            <person name="Pisabarro A.G."/>
            <person name="Lavin J.L."/>
            <person name="Oguiza J.A."/>
            <person name="Master E."/>
            <person name="Henrissat B."/>
            <person name="Coutinho P.M."/>
            <person name="Harris P."/>
            <person name="Magnuson J.K."/>
            <person name="Baker S.E."/>
            <person name="Bruno K."/>
            <person name="Kenealy W."/>
            <person name="Hoegger P.J."/>
            <person name="Kuees U."/>
            <person name="Ramaiya P."/>
            <person name="Lucas S."/>
            <person name="Salamov A."/>
            <person name="Shapiro H."/>
            <person name="Tu H."/>
            <person name="Chee C.L."/>
            <person name="Misra M."/>
            <person name="Xie G."/>
            <person name="Teter S."/>
            <person name="Yaver D."/>
            <person name="James T."/>
            <person name="Mokrejs M."/>
            <person name="Pospisek M."/>
            <person name="Grigoriev I.V."/>
            <person name="Brettin T."/>
            <person name="Rokhsar D."/>
            <person name="Berka R."/>
            <person name="Cullen D."/>
        </authorList>
    </citation>
    <scope>NUCLEOTIDE SEQUENCE [LARGE SCALE GENOMIC DNA]</scope>
    <source>
        <strain>ATCC 44394 / Madison 698-R</strain>
    </source>
</reference>
<organism>
    <name type="scientific">Postia placenta (strain ATCC 44394 / Madison 698-R)</name>
    <name type="common">Brown rot fungus</name>
    <name type="synonym">Poria monticola</name>
    <dbReference type="NCBI Taxonomy" id="561896"/>
    <lineage>
        <taxon>Eukaryota</taxon>
        <taxon>Fungi</taxon>
        <taxon>Dikarya</taxon>
        <taxon>Basidiomycota</taxon>
        <taxon>Agaricomycotina</taxon>
        <taxon>Agaricomycetes</taxon>
        <taxon>Polyporales</taxon>
        <taxon>Adustoporiaceae</taxon>
        <taxon>Rhodonia</taxon>
    </lineage>
</organism>
<keyword id="KW-0472">Membrane</keyword>
<keyword id="KW-0496">Mitochondrion</keyword>
<keyword id="KW-1000">Mitochondrion outer membrane</keyword>
<keyword id="KW-0812">Transmembrane</keyword>
<keyword id="KW-1134">Transmembrane beta strand</keyword>
<sequence>MHPFASYVLRSYYRGTGWNEDNLYANLTRSSNAILDFSVPRGLHFSISKSPNPLFKTTYSMNALPSLNGSIGYIFTSCELDVKGSGDVRFKDMVDRFRVYDQPRRPEGKEEEWLAGERVDTRDYLLYGRVYIPTGRLDALYSTRLSPTLQAMVAAISDPRSSLFAESPRGIAAPSSNIMFSLQHDTGKWCTEYTWSAEDGMWGVRCLHNFGKVGGPSEPVEDSEKSTAAPTKTRSGVKRIDEEDAMEGGLKGRISAGAEFYFSAKEKSAGVSTGIRFTTLPDATPPSFQLPSSSPTQPSLLAHGAPSQPPTTITALFNPMLGHMSGAYSARVSRDLSMSSRFDFNVYSYESEWSIGAEWWTRRGRGMFTSNPPAADTSEKTPSSPPALEAVGDVTGVVKARASTTTDFSLMWEGRLHNMLVSLGIVSNLTSRSKPIKAIGLELSYFSSG</sequence>
<proteinExistence type="inferred from homology"/>
<name>MDM10_POSPM</name>
<gene>
    <name evidence="1" type="primary">MDM10</name>
    <name type="ORF">POSPLDRAFT_88314</name>
</gene>
<accession>B8P366</accession>